<gene>
    <name evidence="1" type="primary">efp</name>
    <name type="ordered locus">PA2851</name>
</gene>
<reference key="1">
    <citation type="journal article" date="2000" name="Nature">
        <title>Complete genome sequence of Pseudomonas aeruginosa PAO1, an opportunistic pathogen.</title>
        <authorList>
            <person name="Stover C.K."/>
            <person name="Pham X.-Q.T."/>
            <person name="Erwin A.L."/>
            <person name="Mizoguchi S.D."/>
            <person name="Warrener P."/>
            <person name="Hickey M.J."/>
            <person name="Brinkman F.S.L."/>
            <person name="Hufnagle W.O."/>
            <person name="Kowalik D.J."/>
            <person name="Lagrou M."/>
            <person name="Garber R.L."/>
            <person name="Goltry L."/>
            <person name="Tolentino E."/>
            <person name="Westbrock-Wadman S."/>
            <person name="Yuan Y."/>
            <person name="Brody L.L."/>
            <person name="Coulter S.N."/>
            <person name="Folger K.R."/>
            <person name="Kas A."/>
            <person name="Larbig K."/>
            <person name="Lim R.M."/>
            <person name="Smith K.A."/>
            <person name="Spencer D.H."/>
            <person name="Wong G.K.-S."/>
            <person name="Wu Z."/>
            <person name="Paulsen I.T."/>
            <person name="Reizer J."/>
            <person name="Saier M.H. Jr."/>
            <person name="Hancock R.E.W."/>
            <person name="Lory S."/>
            <person name="Olson M.V."/>
        </authorList>
    </citation>
    <scope>NUCLEOTIDE SEQUENCE [LARGE SCALE GENOMIC DNA]</scope>
    <source>
        <strain>ATCC 15692 / DSM 22644 / CIP 104116 / JCM 14847 / LMG 12228 / 1C / PRS 101 / PAO1</strain>
    </source>
</reference>
<reference key="2">
    <citation type="journal article" date="2015" name="MBio">
        <title>Cyclic rhamnosylated elongation factor P establishes antibiotic resistance in Pseudomonas aeruginosa.</title>
        <authorList>
            <person name="Rajkovic A."/>
            <person name="Erickson S."/>
            <person name="Witzky A."/>
            <person name="Branson O.E."/>
            <person name="Seo J."/>
            <person name="Gafken P.R."/>
            <person name="Frietas M.A."/>
            <person name="Whitelegge J.P."/>
            <person name="Faull K.F."/>
            <person name="Navarre W."/>
            <person name="Darwin A.J."/>
            <person name="Ibba M."/>
        </authorList>
    </citation>
    <scope>GLYCOSYLATION AT ARG-32</scope>
    <scope>MUTAGENESIS OF ARG-32</scope>
    <source>
        <strain>ATCC 15692 / DSM 22644 / CIP 104116 / JCM 14847 / LMG 12228 / 1C / PRS 101 / PAO1</strain>
    </source>
</reference>
<reference key="3">
    <citation type="journal article" date="2016" name="Chem. Sci.">
        <title>Resolving the alpha-glycosidic linkage of arginine-rhamnosylated translation elongation factor P triggers generation of the first ArgRha specific antibody.</title>
        <authorList>
            <person name="Li X."/>
            <person name="Krafczyk R."/>
            <person name="Macosek J."/>
            <person name="Li Y.L."/>
            <person name="Zou Y."/>
            <person name="Simon B."/>
            <person name="Pan X."/>
            <person name="Wu Q.Y."/>
            <person name="Yan F."/>
            <person name="Li S."/>
            <person name="Hennig J."/>
            <person name="Jung K."/>
            <person name="Lassak J."/>
            <person name="Hu H.G."/>
        </authorList>
    </citation>
    <scope>GLYCOSYLATION AT ARG-32</scope>
    <source>
        <strain>ATCC 15692 / DSM 22644 / CIP 104116 / JCM 14847 / LMG 12228 / 1C / PRS 101 / PAO1</strain>
    </source>
</reference>
<reference key="4">
    <citation type="journal article" date="2017" name="Chem. Sci.">
        <title>Synthesis of rhamnosylated arginine glycopeptides and determination of the glycosidic linkage in bacterial elongation factor P.</title>
        <authorList>
            <person name="Wang S."/>
            <person name="Corcilius L."/>
            <person name="Sharp P.P."/>
            <person name="Rajkovic A."/>
            <person name="Ibba M."/>
            <person name="Parker B.L."/>
            <person name="Payne R.J."/>
        </authorList>
    </citation>
    <scope>GLYCOSYLATION AT ARG-32</scope>
    <source>
        <strain>ATCC 15692 / DSM 22644 / CIP 104116 / JCM 14847 / LMG 12228 / 1C / PRS 101 / PAO1</strain>
    </source>
</reference>
<reference evidence="6" key="5">
    <citation type="journal article" date="2011" name="Proteins">
        <title>Crystal structure of elongation factor P from Pseudomonas aeruginosa at 1.75 A resolution.</title>
        <authorList>
            <person name="Choi S."/>
            <person name="Choe J."/>
        </authorList>
    </citation>
    <scope>X-RAY CRYSTALLOGRAPHY (1.75 ANGSTROMS)</scope>
    <source>
        <strain>ATCC 15692 / DSM 22644 / CIP 104116 / JCM 14847 / LMG 12228 / 1C / PRS 101 / PAO1</strain>
    </source>
</reference>
<reference evidence="7" key="6">
    <citation type="journal article" date="2019" name="J. Bacteriol.">
        <title>Complex structure of Pseudomonas aeruginosa arginine rhamnosyltransferase EarP with its acceptor elongation factor P.</title>
        <authorList>
            <person name="He C."/>
            <person name="Liu N."/>
            <person name="Li F."/>
            <person name="Jia X."/>
            <person name="Peng H."/>
            <person name="Liu Y."/>
            <person name="Xiao Y."/>
        </authorList>
    </citation>
    <scope>X-RAY CRYSTALLOGRAPHY (2.30 ANGSTROMS) IN COMPLEX WITH EARP</scope>
    <scope>GLYCOSYLATION AT ARG-32</scope>
    <scope>MUTAGENESIS OF LYS-29; THR-52 AND LYS-55</scope>
    <source>
        <strain>ATCC 15692 / DSM 22644 / CIP 104116 / JCM 14847 / LMG 12228 / 1C / PRS 101 / PAO1</strain>
    </source>
</reference>
<name>EFP_PSEAE</name>
<accession>Q9HZZ2</accession>
<dbReference type="EMBL" id="AE004091">
    <property type="protein sequence ID" value="AAG06239.1"/>
    <property type="molecule type" value="Genomic_DNA"/>
</dbReference>
<dbReference type="PIR" id="F83290">
    <property type="entry name" value="F83290"/>
</dbReference>
<dbReference type="RefSeq" id="NP_251541.1">
    <property type="nucleotide sequence ID" value="NC_002516.2"/>
</dbReference>
<dbReference type="RefSeq" id="WP_003090942.1">
    <property type="nucleotide sequence ID" value="NZ_QZGE01000011.1"/>
</dbReference>
<dbReference type="PDB" id="3OYY">
    <property type="method" value="X-ray"/>
    <property type="resolution" value="1.75 A"/>
    <property type="chains" value="A/B=1-188"/>
</dbReference>
<dbReference type="PDB" id="6J7M">
    <property type="method" value="X-ray"/>
    <property type="resolution" value="2.30 A"/>
    <property type="chains" value="M/N=1-188"/>
</dbReference>
<dbReference type="PDBsum" id="3OYY"/>
<dbReference type="PDBsum" id="6J7M"/>
<dbReference type="SMR" id="Q9HZZ2"/>
<dbReference type="FunCoup" id="Q9HZZ2">
    <property type="interactions" value="662"/>
</dbReference>
<dbReference type="STRING" id="208964.PA2851"/>
<dbReference type="GlyCosmos" id="Q9HZZ2">
    <property type="glycosylation" value="1 site, No reported glycans"/>
</dbReference>
<dbReference type="PaxDb" id="208964-PA2851"/>
<dbReference type="GeneID" id="77220646"/>
<dbReference type="GeneID" id="882605"/>
<dbReference type="KEGG" id="pae:PA2851"/>
<dbReference type="PATRIC" id="fig|208964.12.peg.2991"/>
<dbReference type="PseudoCAP" id="PA2851"/>
<dbReference type="HOGENOM" id="CLU_074944_2_1_6"/>
<dbReference type="InParanoid" id="Q9HZZ2"/>
<dbReference type="OrthoDB" id="9801844at2"/>
<dbReference type="PhylomeDB" id="Q9HZZ2"/>
<dbReference type="BioCyc" id="PAER208964:G1FZ6-2900-MONOMER"/>
<dbReference type="UniPathway" id="UPA00345"/>
<dbReference type="EvolutionaryTrace" id="Q9HZZ2"/>
<dbReference type="Proteomes" id="UP000002438">
    <property type="component" value="Chromosome"/>
</dbReference>
<dbReference type="GO" id="GO:0005737">
    <property type="term" value="C:cytoplasm"/>
    <property type="evidence" value="ECO:0000318"/>
    <property type="project" value="GO_Central"/>
</dbReference>
<dbReference type="GO" id="GO:0003746">
    <property type="term" value="F:translation elongation factor activity"/>
    <property type="evidence" value="ECO:0000318"/>
    <property type="project" value="GO_Central"/>
</dbReference>
<dbReference type="GO" id="GO:0043043">
    <property type="term" value="P:peptide biosynthetic process"/>
    <property type="evidence" value="ECO:0007669"/>
    <property type="project" value="InterPro"/>
</dbReference>
<dbReference type="CDD" id="cd04470">
    <property type="entry name" value="S1_EF-P_repeat_1"/>
    <property type="match status" value="1"/>
</dbReference>
<dbReference type="CDD" id="cd05794">
    <property type="entry name" value="S1_EF-P_repeat_2"/>
    <property type="match status" value="1"/>
</dbReference>
<dbReference type="FunFam" id="2.30.30.30:FF:000003">
    <property type="entry name" value="Elongation factor P"/>
    <property type="match status" value="1"/>
</dbReference>
<dbReference type="FunFam" id="2.40.50.140:FF:000004">
    <property type="entry name" value="Elongation factor P"/>
    <property type="match status" value="1"/>
</dbReference>
<dbReference type="FunFam" id="2.40.50.140:FF:000009">
    <property type="entry name" value="Elongation factor P"/>
    <property type="match status" value="1"/>
</dbReference>
<dbReference type="Gene3D" id="2.30.30.30">
    <property type="match status" value="1"/>
</dbReference>
<dbReference type="Gene3D" id="2.40.50.140">
    <property type="entry name" value="Nucleic acid-binding proteins"/>
    <property type="match status" value="2"/>
</dbReference>
<dbReference type="HAMAP" id="MF_00141">
    <property type="entry name" value="EF_P"/>
    <property type="match status" value="1"/>
</dbReference>
<dbReference type="InterPro" id="IPR015365">
    <property type="entry name" value="Elong-fact-P_C"/>
</dbReference>
<dbReference type="InterPro" id="IPR012340">
    <property type="entry name" value="NA-bd_OB-fold"/>
</dbReference>
<dbReference type="InterPro" id="IPR014722">
    <property type="entry name" value="Rib_uL2_dom2"/>
</dbReference>
<dbReference type="InterPro" id="IPR020599">
    <property type="entry name" value="Transl_elong_fac_P/YeiP"/>
</dbReference>
<dbReference type="InterPro" id="IPR013185">
    <property type="entry name" value="Transl_elong_KOW-like"/>
</dbReference>
<dbReference type="InterPro" id="IPR001059">
    <property type="entry name" value="Transl_elong_P/YeiP_cen"/>
</dbReference>
<dbReference type="InterPro" id="IPR011768">
    <property type="entry name" value="Transl_elongation_fac_P"/>
</dbReference>
<dbReference type="InterPro" id="IPR008991">
    <property type="entry name" value="Translation_prot_SH3-like_sf"/>
</dbReference>
<dbReference type="NCBIfam" id="TIGR00038">
    <property type="entry name" value="efp"/>
    <property type="match status" value="1"/>
</dbReference>
<dbReference type="NCBIfam" id="NF001810">
    <property type="entry name" value="PRK00529.1"/>
    <property type="match status" value="1"/>
</dbReference>
<dbReference type="PANTHER" id="PTHR30053">
    <property type="entry name" value="ELONGATION FACTOR P"/>
    <property type="match status" value="1"/>
</dbReference>
<dbReference type="PANTHER" id="PTHR30053:SF12">
    <property type="entry name" value="ELONGATION FACTOR P (EF-P) FAMILY PROTEIN"/>
    <property type="match status" value="1"/>
</dbReference>
<dbReference type="Pfam" id="PF01132">
    <property type="entry name" value="EFP"/>
    <property type="match status" value="1"/>
</dbReference>
<dbReference type="Pfam" id="PF08207">
    <property type="entry name" value="EFP_N"/>
    <property type="match status" value="1"/>
</dbReference>
<dbReference type="Pfam" id="PF09285">
    <property type="entry name" value="Elong-fact-P_C"/>
    <property type="match status" value="1"/>
</dbReference>
<dbReference type="PIRSF" id="PIRSF005901">
    <property type="entry name" value="EF-P"/>
    <property type="match status" value="1"/>
</dbReference>
<dbReference type="SMART" id="SM01185">
    <property type="entry name" value="EFP"/>
    <property type="match status" value="1"/>
</dbReference>
<dbReference type="SMART" id="SM00841">
    <property type="entry name" value="Elong-fact-P_C"/>
    <property type="match status" value="1"/>
</dbReference>
<dbReference type="SUPFAM" id="SSF50249">
    <property type="entry name" value="Nucleic acid-binding proteins"/>
    <property type="match status" value="2"/>
</dbReference>
<dbReference type="SUPFAM" id="SSF50104">
    <property type="entry name" value="Translation proteins SH3-like domain"/>
    <property type="match status" value="1"/>
</dbReference>
<sequence>MKTAQEFRAGQVANINGAPWVIQKAEFNKSGRNAAVVKMKLKNLLTGAGTETVFKADDKLEPIILDRKEVTYSYFADPLYVFMDSEFNQYEIEKDDLEGVLTFIEDGMTDICEAVFYNDKVISVELPTTIVRQIAYTEPAVRGDTSGKVMKTARLNNGAELQVSAFCEIGDSIEIDTRTGEYKSRVKA</sequence>
<feature type="chain" id="PRO_0000094310" description="Elongation factor P">
    <location>
        <begin position="1"/>
        <end position="188"/>
    </location>
</feature>
<feature type="glycosylation site" description="N-alpha-linked (Rha) arginine" evidence="2 3 4 5">
    <location>
        <position position="32"/>
    </location>
</feature>
<feature type="mutagenesis site" description="Slightly decreased binding to EarP." evidence="5">
    <original>K</original>
    <variation>A</variation>
    <location>
        <position position="29"/>
    </location>
</feature>
<feature type="mutagenesis site" description="Abolished arginine rhamnosylation." evidence="2">
    <original>R</original>
    <variation>A</variation>
    <location>
        <position position="32"/>
    </location>
</feature>
<feature type="mutagenesis site" description="Slightly decreased binding to EarP." evidence="5">
    <original>T</original>
    <variation>V</variation>
    <location>
        <position position="52"/>
    </location>
</feature>
<feature type="mutagenesis site" description="Strongly decreased binding to EarP." evidence="5">
    <original>K</original>
    <variation>A</variation>
    <location>
        <position position="55"/>
    </location>
</feature>
<feature type="helix" evidence="8">
    <location>
        <begin position="4"/>
        <end position="6"/>
    </location>
</feature>
<feature type="strand" evidence="8">
    <location>
        <begin position="12"/>
        <end position="15"/>
    </location>
</feature>
<feature type="strand" evidence="8">
    <location>
        <begin position="18"/>
        <end position="28"/>
    </location>
</feature>
<feature type="strand" evidence="8">
    <location>
        <begin position="36"/>
        <end position="43"/>
    </location>
</feature>
<feature type="turn" evidence="8">
    <location>
        <begin position="44"/>
        <end position="46"/>
    </location>
</feature>
<feature type="strand" evidence="8">
    <location>
        <begin position="49"/>
        <end position="55"/>
    </location>
</feature>
<feature type="strand" evidence="8">
    <location>
        <begin position="59"/>
        <end position="62"/>
    </location>
</feature>
<feature type="strand" evidence="8">
    <location>
        <begin position="66"/>
        <end position="75"/>
    </location>
</feature>
<feature type="strand" evidence="8">
    <location>
        <begin position="77"/>
        <end position="84"/>
    </location>
</feature>
<feature type="strand" evidence="8">
    <location>
        <begin position="89"/>
        <end position="92"/>
    </location>
</feature>
<feature type="helix" evidence="8">
    <location>
        <begin position="94"/>
        <end position="96"/>
    </location>
</feature>
<feature type="turn" evidence="8">
    <location>
        <begin position="98"/>
        <end position="100"/>
    </location>
</feature>
<feature type="helix" evidence="8">
    <location>
        <begin position="101"/>
        <end position="103"/>
    </location>
</feature>
<feature type="strand" evidence="8">
    <location>
        <begin position="112"/>
        <end position="117"/>
    </location>
</feature>
<feature type="strand" evidence="8">
    <location>
        <begin position="120"/>
        <end position="125"/>
    </location>
</feature>
<feature type="strand" evidence="8">
    <location>
        <begin position="128"/>
        <end position="137"/>
    </location>
</feature>
<feature type="strand" evidence="8">
    <location>
        <begin position="150"/>
        <end position="155"/>
    </location>
</feature>
<feature type="strand" evidence="8">
    <location>
        <begin position="160"/>
        <end position="164"/>
    </location>
</feature>
<feature type="strand" evidence="8">
    <location>
        <begin position="172"/>
        <end position="176"/>
    </location>
</feature>
<feature type="turn" evidence="8">
    <location>
        <begin position="177"/>
        <end position="180"/>
    </location>
</feature>
<feature type="strand" evidence="8">
    <location>
        <begin position="181"/>
        <end position="185"/>
    </location>
</feature>
<organism>
    <name type="scientific">Pseudomonas aeruginosa (strain ATCC 15692 / DSM 22644 / CIP 104116 / JCM 14847 / LMG 12228 / 1C / PRS 101 / PAO1)</name>
    <dbReference type="NCBI Taxonomy" id="208964"/>
    <lineage>
        <taxon>Bacteria</taxon>
        <taxon>Pseudomonadati</taxon>
        <taxon>Pseudomonadota</taxon>
        <taxon>Gammaproteobacteria</taxon>
        <taxon>Pseudomonadales</taxon>
        <taxon>Pseudomonadaceae</taxon>
        <taxon>Pseudomonas</taxon>
    </lineage>
</organism>
<protein>
    <recommendedName>
        <fullName evidence="1">Elongation factor P</fullName>
        <shortName evidence="1">EF-P</shortName>
    </recommendedName>
</protein>
<proteinExistence type="evidence at protein level"/>
<comment type="function">
    <text evidence="1">Involved in peptide bond synthesis. Stimulates efficient translation and peptide-bond synthesis on native or reconstituted 70S ribosomes in vitro. Probably functions indirectly by altering the affinity of the ribosome for aminoacyl-tRNA, thus increasing their reactivity as acceptors for peptidyl transferase.</text>
</comment>
<comment type="pathway">
    <text evidence="1">Protein biosynthesis; polypeptide chain elongation.</text>
</comment>
<comment type="subcellular location">
    <subcellularLocation>
        <location evidence="1">Cytoplasm</location>
    </subcellularLocation>
</comment>
<comment type="PTM">
    <text evidence="5">Glycosylated ar Arg-32 by EarP: arginine rhamnosylation is required for EF-P function and rescue of polyproline stalled ribosomes.</text>
</comment>
<comment type="similarity">
    <text evidence="1">Belongs to the elongation factor P family.</text>
</comment>
<evidence type="ECO:0000255" key="1">
    <source>
        <dbReference type="HAMAP-Rule" id="MF_00141"/>
    </source>
</evidence>
<evidence type="ECO:0000269" key="2">
    <source>
    </source>
</evidence>
<evidence type="ECO:0000269" key="3">
    <source>
    </source>
</evidence>
<evidence type="ECO:0000269" key="4">
    <source>
    </source>
</evidence>
<evidence type="ECO:0000269" key="5">
    <source>
    </source>
</evidence>
<evidence type="ECO:0007744" key="6">
    <source>
        <dbReference type="PDB" id="3OYY"/>
    </source>
</evidence>
<evidence type="ECO:0007744" key="7">
    <source>
        <dbReference type="PDB" id="6J7M"/>
    </source>
</evidence>
<evidence type="ECO:0007829" key="8">
    <source>
        <dbReference type="PDB" id="3OYY"/>
    </source>
</evidence>
<keyword id="KW-0002">3D-structure</keyword>
<keyword id="KW-0963">Cytoplasm</keyword>
<keyword id="KW-0251">Elongation factor</keyword>
<keyword id="KW-0325">Glycoprotein</keyword>
<keyword id="KW-0648">Protein biosynthesis</keyword>
<keyword id="KW-1185">Reference proteome</keyword>